<reference key="1">
    <citation type="journal article" date="2005" name="Nat. Biotechnol.">
        <title>Complete genome sequence of the plant commensal Pseudomonas fluorescens Pf-5.</title>
        <authorList>
            <person name="Paulsen I.T."/>
            <person name="Press C.M."/>
            <person name="Ravel J."/>
            <person name="Kobayashi D.Y."/>
            <person name="Myers G.S.A."/>
            <person name="Mavrodi D.V."/>
            <person name="DeBoy R.T."/>
            <person name="Seshadri R."/>
            <person name="Ren Q."/>
            <person name="Madupu R."/>
            <person name="Dodson R.J."/>
            <person name="Durkin A.S."/>
            <person name="Brinkac L.M."/>
            <person name="Daugherty S.C."/>
            <person name="Sullivan S.A."/>
            <person name="Rosovitz M.J."/>
            <person name="Gwinn M.L."/>
            <person name="Zhou L."/>
            <person name="Schneider D.J."/>
            <person name="Cartinhour S.W."/>
            <person name="Nelson W.C."/>
            <person name="Weidman J."/>
            <person name="Watkins K."/>
            <person name="Tran K."/>
            <person name="Khouri H."/>
            <person name="Pierson E.A."/>
            <person name="Pierson L.S. III"/>
            <person name="Thomashow L.S."/>
            <person name="Loper J.E."/>
        </authorList>
    </citation>
    <scope>NUCLEOTIDE SEQUENCE [LARGE SCALE GENOMIC DNA]</scope>
    <source>
        <strain>ATCC BAA-477 / NRRL B-23932 / Pf-5</strain>
    </source>
</reference>
<feature type="chain" id="PRO_0000339731" description="Xanthine phosphoribosyltransferase">
    <location>
        <begin position="1"/>
        <end position="190"/>
    </location>
</feature>
<feature type="binding site" evidence="1">
    <location>
        <position position="20"/>
    </location>
    <ligand>
        <name>xanthine</name>
        <dbReference type="ChEBI" id="CHEBI:17712"/>
    </ligand>
</feature>
<feature type="binding site" evidence="1">
    <location>
        <position position="27"/>
    </location>
    <ligand>
        <name>xanthine</name>
        <dbReference type="ChEBI" id="CHEBI:17712"/>
    </ligand>
</feature>
<feature type="binding site" evidence="1">
    <location>
        <begin position="128"/>
        <end position="132"/>
    </location>
    <ligand>
        <name>5-phospho-alpha-D-ribose 1-diphosphate</name>
        <dbReference type="ChEBI" id="CHEBI:58017"/>
    </ligand>
</feature>
<feature type="binding site" evidence="1">
    <location>
        <position position="156"/>
    </location>
    <ligand>
        <name>xanthine</name>
        <dbReference type="ChEBI" id="CHEBI:17712"/>
    </ligand>
</feature>
<protein>
    <recommendedName>
        <fullName evidence="1">Xanthine phosphoribosyltransferase</fullName>
        <shortName evidence="1">XPRTase</shortName>
        <ecNumber evidence="1">2.4.2.22</ecNumber>
    </recommendedName>
</protein>
<gene>
    <name evidence="1" type="primary">xpt</name>
    <name type="ordered locus">PFL_6032</name>
</gene>
<sequence>MEALHKKIREEGIVLSDQVLKVDAFLNHQIDPQLMKLIGDEFATLFKDSGITKIVTIEASGIAPAIMTGLNLGVPVIFARKHQSLTLTENLLSATVYSFTKQVESTVAISPRHLTSSDRVLIIDDFLANGKASQALISIIKQAGATVAGLGIVIEKSFQGGRAELDSQGYRVESLARVKSLAGGVVTFIE</sequence>
<proteinExistence type="inferred from homology"/>
<dbReference type="EC" id="2.4.2.22" evidence="1"/>
<dbReference type="EMBL" id="CP000076">
    <property type="protein sequence ID" value="AAY95221.1"/>
    <property type="molecule type" value="Genomic_DNA"/>
</dbReference>
<dbReference type="RefSeq" id="WP_011064203.1">
    <property type="nucleotide sequence ID" value="NC_004129.6"/>
</dbReference>
<dbReference type="SMR" id="Q4K3U3"/>
<dbReference type="STRING" id="220664.PFL_6032"/>
<dbReference type="KEGG" id="pfl:PFL_6032"/>
<dbReference type="PATRIC" id="fig|220664.5.peg.6158"/>
<dbReference type="eggNOG" id="COG0503">
    <property type="taxonomic scope" value="Bacteria"/>
</dbReference>
<dbReference type="HOGENOM" id="CLU_099015_0_0_6"/>
<dbReference type="UniPathway" id="UPA00602">
    <property type="reaction ID" value="UER00658"/>
</dbReference>
<dbReference type="Proteomes" id="UP000008540">
    <property type="component" value="Chromosome"/>
</dbReference>
<dbReference type="GO" id="GO:0005737">
    <property type="term" value="C:cytoplasm"/>
    <property type="evidence" value="ECO:0007669"/>
    <property type="project" value="UniProtKB-SubCell"/>
</dbReference>
<dbReference type="GO" id="GO:0000310">
    <property type="term" value="F:xanthine phosphoribosyltransferase activity"/>
    <property type="evidence" value="ECO:0007669"/>
    <property type="project" value="UniProtKB-UniRule"/>
</dbReference>
<dbReference type="GO" id="GO:0006166">
    <property type="term" value="P:purine ribonucleoside salvage"/>
    <property type="evidence" value="ECO:0007669"/>
    <property type="project" value="UniProtKB-KW"/>
</dbReference>
<dbReference type="GO" id="GO:0046110">
    <property type="term" value="P:xanthine metabolic process"/>
    <property type="evidence" value="ECO:0007669"/>
    <property type="project" value="InterPro"/>
</dbReference>
<dbReference type="GO" id="GO:0032265">
    <property type="term" value="P:XMP salvage"/>
    <property type="evidence" value="ECO:0007669"/>
    <property type="project" value="UniProtKB-UniRule"/>
</dbReference>
<dbReference type="CDD" id="cd06223">
    <property type="entry name" value="PRTases_typeI"/>
    <property type="match status" value="1"/>
</dbReference>
<dbReference type="FunFam" id="3.40.50.2020:FF:000027">
    <property type="entry name" value="Xanthine phosphoribosyltransferase"/>
    <property type="match status" value="1"/>
</dbReference>
<dbReference type="Gene3D" id="3.40.50.2020">
    <property type="match status" value="1"/>
</dbReference>
<dbReference type="HAMAP" id="MF_01184">
    <property type="entry name" value="XPRTase"/>
    <property type="match status" value="1"/>
</dbReference>
<dbReference type="InterPro" id="IPR000836">
    <property type="entry name" value="PRibTrfase_dom"/>
</dbReference>
<dbReference type="InterPro" id="IPR029057">
    <property type="entry name" value="PRTase-like"/>
</dbReference>
<dbReference type="InterPro" id="IPR050118">
    <property type="entry name" value="Pur/Pyrimidine_PRTase"/>
</dbReference>
<dbReference type="InterPro" id="IPR010079">
    <property type="entry name" value="Xanthine_PRibTrfase"/>
</dbReference>
<dbReference type="NCBIfam" id="NF006671">
    <property type="entry name" value="PRK09219.1"/>
    <property type="match status" value="1"/>
</dbReference>
<dbReference type="NCBIfam" id="TIGR01744">
    <property type="entry name" value="XPRTase"/>
    <property type="match status" value="1"/>
</dbReference>
<dbReference type="PANTHER" id="PTHR43864">
    <property type="entry name" value="HYPOXANTHINE/GUANINE PHOSPHORIBOSYLTRANSFERASE"/>
    <property type="match status" value="1"/>
</dbReference>
<dbReference type="PANTHER" id="PTHR43864:SF1">
    <property type="entry name" value="XANTHINE PHOSPHORIBOSYLTRANSFERASE"/>
    <property type="match status" value="1"/>
</dbReference>
<dbReference type="SUPFAM" id="SSF53271">
    <property type="entry name" value="PRTase-like"/>
    <property type="match status" value="1"/>
</dbReference>
<organism>
    <name type="scientific">Pseudomonas fluorescens (strain ATCC BAA-477 / NRRL B-23932 / Pf-5)</name>
    <dbReference type="NCBI Taxonomy" id="220664"/>
    <lineage>
        <taxon>Bacteria</taxon>
        <taxon>Pseudomonadati</taxon>
        <taxon>Pseudomonadota</taxon>
        <taxon>Gammaproteobacteria</taxon>
        <taxon>Pseudomonadales</taxon>
        <taxon>Pseudomonadaceae</taxon>
        <taxon>Pseudomonas</taxon>
    </lineage>
</organism>
<comment type="function">
    <text evidence="1">Converts the preformed base xanthine, a product of nucleic acid breakdown, to xanthosine 5'-monophosphate (XMP), so it can be reused for RNA or DNA synthesis.</text>
</comment>
<comment type="catalytic activity">
    <reaction evidence="1">
        <text>XMP + diphosphate = xanthine + 5-phospho-alpha-D-ribose 1-diphosphate</text>
        <dbReference type="Rhea" id="RHEA:10800"/>
        <dbReference type="ChEBI" id="CHEBI:17712"/>
        <dbReference type="ChEBI" id="CHEBI:33019"/>
        <dbReference type="ChEBI" id="CHEBI:57464"/>
        <dbReference type="ChEBI" id="CHEBI:58017"/>
        <dbReference type="EC" id="2.4.2.22"/>
    </reaction>
</comment>
<comment type="pathway">
    <text evidence="1">Purine metabolism; XMP biosynthesis via salvage pathway; XMP from xanthine: step 1/1.</text>
</comment>
<comment type="subunit">
    <text evidence="1">Homodimer.</text>
</comment>
<comment type="subcellular location">
    <subcellularLocation>
        <location evidence="1">Cytoplasm</location>
    </subcellularLocation>
</comment>
<comment type="similarity">
    <text evidence="1">Belongs to the purine/pyrimidine phosphoribosyltransferase family. Xpt subfamily.</text>
</comment>
<accession>Q4K3U3</accession>
<keyword id="KW-0963">Cytoplasm</keyword>
<keyword id="KW-0328">Glycosyltransferase</keyword>
<keyword id="KW-0660">Purine salvage</keyword>
<keyword id="KW-0808">Transferase</keyword>
<name>XPT_PSEF5</name>
<evidence type="ECO:0000255" key="1">
    <source>
        <dbReference type="HAMAP-Rule" id="MF_01184"/>
    </source>
</evidence>